<feature type="chain" id="PRO_0000268914" description="Sigma factor-binding protein Crl">
    <location>
        <begin position="1"/>
        <end position="133"/>
    </location>
</feature>
<feature type="region of interest" description="Essential for activity" evidence="1">
    <location>
        <begin position="99"/>
        <end position="122"/>
    </location>
</feature>
<evidence type="ECO:0000255" key="1">
    <source>
        <dbReference type="HAMAP-Rule" id="MF_01178"/>
    </source>
</evidence>
<comment type="function">
    <text evidence="1">Binds to the sigma-S subunit of RNA polymerase, activating expression of sigma-S-regulated genes. Stimulates RNA polymerase holoenzyme formation and may bind to several other sigma factors, such as sigma-70 and sigma-32.</text>
</comment>
<comment type="subcellular location">
    <subcellularLocation>
        <location evidence="1">Cytoplasm</location>
    </subcellularLocation>
</comment>
<comment type="similarity">
    <text evidence="1">Belongs to the Crl family.</text>
</comment>
<proteinExistence type="inferred from homology"/>
<keyword id="KW-0010">Activator</keyword>
<keyword id="KW-0963">Cytoplasm</keyword>
<keyword id="KW-0804">Transcription</keyword>
<keyword id="KW-0805">Transcription regulation</keyword>
<sequence>MTLTSAHPKSKLMKRFAALGPYLREGQCQNDHFFFDCLAVCINVKLAPEKREFWGWWIELEPSAGRFTYVYQLGLFNKEGNWNAEKISDPEVQDKLESTLRSFHLRLEEMLASIDMKLEPAADFNDQPVKLSA</sequence>
<protein>
    <recommendedName>
        <fullName evidence="1">Sigma factor-binding protein Crl</fullName>
    </recommendedName>
</protein>
<accession>Q1C4E5</accession>
<dbReference type="EMBL" id="CP000308">
    <property type="protein sequence ID" value="ABG14677.1"/>
    <property type="molecule type" value="Genomic_DNA"/>
</dbReference>
<dbReference type="RefSeq" id="WP_002208702.1">
    <property type="nucleotide sequence ID" value="NZ_CP009906.1"/>
</dbReference>
<dbReference type="SMR" id="Q1C4E5"/>
<dbReference type="GeneID" id="57975495"/>
<dbReference type="KEGG" id="ypa:YPA_2715"/>
<dbReference type="Proteomes" id="UP000001971">
    <property type="component" value="Chromosome"/>
</dbReference>
<dbReference type="GO" id="GO:0005737">
    <property type="term" value="C:cytoplasm"/>
    <property type="evidence" value="ECO:0007669"/>
    <property type="project" value="UniProtKB-SubCell"/>
</dbReference>
<dbReference type="GO" id="GO:0045893">
    <property type="term" value="P:positive regulation of DNA-templated transcription"/>
    <property type="evidence" value="ECO:0007669"/>
    <property type="project" value="UniProtKB-UniRule"/>
</dbReference>
<dbReference type="Gene3D" id="3.30.310.230">
    <property type="entry name" value="Sigma factor-binding protein Crl monomer"/>
    <property type="match status" value="1"/>
</dbReference>
<dbReference type="HAMAP" id="MF_01178">
    <property type="entry name" value="Crl"/>
    <property type="match status" value="1"/>
</dbReference>
<dbReference type="InterPro" id="IPR009986">
    <property type="entry name" value="Tscrpt_reg_Crl"/>
</dbReference>
<dbReference type="InterPro" id="IPR038208">
    <property type="entry name" value="Tscrpt_reg_Crl_sf"/>
</dbReference>
<dbReference type="NCBIfam" id="NF008217">
    <property type="entry name" value="PRK10984.1"/>
    <property type="match status" value="1"/>
</dbReference>
<dbReference type="Pfam" id="PF07417">
    <property type="entry name" value="Crl"/>
    <property type="match status" value="1"/>
</dbReference>
<gene>
    <name evidence="1" type="primary">crl</name>
    <name type="ordered locus">YPA_2715</name>
</gene>
<reference key="1">
    <citation type="journal article" date="2006" name="J. Bacteriol.">
        <title>Complete genome sequence of Yersinia pestis strains Antiqua and Nepal516: evidence of gene reduction in an emerging pathogen.</title>
        <authorList>
            <person name="Chain P.S.G."/>
            <person name="Hu P."/>
            <person name="Malfatti S.A."/>
            <person name="Radnedge L."/>
            <person name="Larimer F."/>
            <person name="Vergez L.M."/>
            <person name="Worsham P."/>
            <person name="Chu M.C."/>
            <person name="Andersen G.L."/>
        </authorList>
    </citation>
    <scope>NUCLEOTIDE SEQUENCE [LARGE SCALE GENOMIC DNA]</scope>
    <source>
        <strain>Antiqua</strain>
    </source>
</reference>
<name>CRL_YERPA</name>
<organism>
    <name type="scientific">Yersinia pestis bv. Antiqua (strain Antiqua)</name>
    <dbReference type="NCBI Taxonomy" id="360102"/>
    <lineage>
        <taxon>Bacteria</taxon>
        <taxon>Pseudomonadati</taxon>
        <taxon>Pseudomonadota</taxon>
        <taxon>Gammaproteobacteria</taxon>
        <taxon>Enterobacterales</taxon>
        <taxon>Yersiniaceae</taxon>
        <taxon>Yersinia</taxon>
    </lineage>
</organism>